<comment type="induction">
    <text>By auxin.</text>
</comment>
<comment type="similarity">
    <text evidence="2">Belongs to the aldo/keto reductase family. Aldo/keto reductase 2 subfamily.</text>
</comment>
<keyword id="KW-0927">Auxin signaling pathway</keyword>
<keyword id="KW-0521">NADP</keyword>
<keyword id="KW-0560">Oxidoreductase</keyword>
<keyword id="KW-1185">Reference proteome</keyword>
<organism>
    <name type="scientific">Nicotiana tabacum</name>
    <name type="common">Common tobacco</name>
    <dbReference type="NCBI Taxonomy" id="4097"/>
    <lineage>
        <taxon>Eukaryota</taxon>
        <taxon>Viridiplantae</taxon>
        <taxon>Streptophyta</taxon>
        <taxon>Embryophyta</taxon>
        <taxon>Tracheophyta</taxon>
        <taxon>Spermatophyta</taxon>
        <taxon>Magnoliopsida</taxon>
        <taxon>eudicotyledons</taxon>
        <taxon>Gunneridae</taxon>
        <taxon>Pentapetalae</taxon>
        <taxon>asterids</taxon>
        <taxon>lamiids</taxon>
        <taxon>Solanales</taxon>
        <taxon>Solanaceae</taxon>
        <taxon>Nicotianoideae</taxon>
        <taxon>Nicotianeae</taxon>
        <taxon>Nicotiana</taxon>
    </lineage>
</organism>
<feature type="chain" id="PRO_0000070380" description="Auxin-induced protein PCNT115">
    <location>
        <begin position="1"/>
        <end position="307"/>
    </location>
</feature>
<feature type="active site" description="Proton donor" evidence="1">
    <location>
        <position position="64"/>
    </location>
</feature>
<feature type="binding site" evidence="1">
    <location>
        <position position="136"/>
    </location>
    <ligand>
        <name>substrate</name>
    </ligand>
</feature>
<feature type="binding site" evidence="1">
    <location>
        <begin position="215"/>
        <end position="225"/>
    </location>
    <ligand>
        <name>NADP(+)</name>
        <dbReference type="ChEBI" id="CHEBI:58349"/>
    </ligand>
</feature>
<feature type="site" description="Lowers pKa of active site Tyr" evidence="1">
    <location>
        <position position="90"/>
    </location>
</feature>
<sequence length="307" mass="33857">MAKEGTKVPRIKLGSQGLEVSAQGLGCMGMSAFYGPPKPEPDMIQLIHHAINSGITLLDTSDVYGPHTNEILLGKALKGGTRERVVLATKFGIVLGDEKKAEGKRAVHGDPAYVRAACEASLKRLDIDCIDLYYQHRVDTRVPIEITVGELKKLVEEGKLKYIGLSEASASTIRRAHAVHPITAVQLEWSLWSRDVEEEIIPTCRELGIGIVAYSPLGRGFLSSGPKLLEDMSNEDYRKYLPRFQAENLENNKNLYERICEMAVRKGCTPSQLALAWVHHQGNDVCPIPGTTKIENLNQNMKPCPSS</sequence>
<evidence type="ECO:0000250" key="1"/>
<evidence type="ECO:0000305" key="2"/>
<protein>
    <recommendedName>
        <fullName>Auxin-induced protein PCNT115</fullName>
    </recommendedName>
</protein>
<accession>P40691</accession>
<dbReference type="EMBL" id="X56267">
    <property type="protein sequence ID" value="CAA39708.1"/>
    <property type="molecule type" value="mRNA"/>
</dbReference>
<dbReference type="PIR" id="S16390">
    <property type="entry name" value="S16390"/>
</dbReference>
<dbReference type="SMR" id="P40691"/>
<dbReference type="STRING" id="4097.P40691"/>
<dbReference type="PaxDb" id="4097-P40691"/>
<dbReference type="Proteomes" id="UP000084051">
    <property type="component" value="Unplaced"/>
</dbReference>
<dbReference type="GO" id="GO:0005737">
    <property type="term" value="C:cytoplasm"/>
    <property type="evidence" value="ECO:0000318"/>
    <property type="project" value="GO_Central"/>
</dbReference>
<dbReference type="GO" id="GO:0004033">
    <property type="term" value="F:aldo-keto reductase (NADPH) activity"/>
    <property type="evidence" value="ECO:0000318"/>
    <property type="project" value="GO_Central"/>
</dbReference>
<dbReference type="GO" id="GO:0009734">
    <property type="term" value="P:auxin-activated signaling pathway"/>
    <property type="evidence" value="ECO:0007669"/>
    <property type="project" value="UniProtKB-KW"/>
</dbReference>
<dbReference type="CDD" id="cd19145">
    <property type="entry name" value="AKR_AKR13D1"/>
    <property type="match status" value="1"/>
</dbReference>
<dbReference type="FunFam" id="3.20.20.100:FF:000048">
    <property type="entry name" value="Probable aldo-keto reductase 4"/>
    <property type="match status" value="1"/>
</dbReference>
<dbReference type="Gene3D" id="3.20.20.100">
    <property type="entry name" value="NADP-dependent oxidoreductase domain"/>
    <property type="match status" value="1"/>
</dbReference>
<dbReference type="InterPro" id="IPR050791">
    <property type="entry name" value="Aldo-Keto_reductase"/>
</dbReference>
<dbReference type="InterPro" id="IPR023210">
    <property type="entry name" value="NADP_OxRdtase_dom"/>
</dbReference>
<dbReference type="InterPro" id="IPR036812">
    <property type="entry name" value="NADP_OxRdtase_dom_sf"/>
</dbReference>
<dbReference type="PANTHER" id="PTHR43625">
    <property type="entry name" value="AFLATOXIN B1 ALDEHYDE REDUCTASE"/>
    <property type="match status" value="1"/>
</dbReference>
<dbReference type="PANTHER" id="PTHR43625:SF98">
    <property type="entry name" value="AUXIN-INDUCED PROTEIN PCNT115"/>
    <property type="match status" value="1"/>
</dbReference>
<dbReference type="Pfam" id="PF00248">
    <property type="entry name" value="Aldo_ket_red"/>
    <property type="match status" value="1"/>
</dbReference>
<dbReference type="SUPFAM" id="SSF51430">
    <property type="entry name" value="NAD(P)-linked oxidoreductase"/>
    <property type="match status" value="1"/>
</dbReference>
<reference key="1">
    <citation type="submission" date="1990-08" db="EMBL/GenBank/DDBJ databases">
        <authorList>
            <person name="van der Zaal E.J."/>
        </authorList>
    </citation>
    <scope>NUCLEOTIDE SEQUENCE [MRNA]</scope>
    <source>
        <strain>cv. White Burley</strain>
    </source>
</reference>
<proteinExistence type="evidence at transcript level"/>
<name>A115_TOBAC</name>